<accession>Q812R8</accession>
<protein>
    <recommendedName>
        <fullName evidence="1">UPF0297 protein BC_4382</fullName>
    </recommendedName>
</protein>
<feature type="chain" id="PRO_0000216958" description="UPF0297 protein BC_4382">
    <location>
        <begin position="1"/>
        <end position="88"/>
    </location>
</feature>
<name>Y4382_BACCR</name>
<proteinExistence type="inferred from homology"/>
<organism>
    <name type="scientific">Bacillus cereus (strain ATCC 14579 / DSM 31 / CCUG 7414 / JCM 2152 / NBRC 15305 / NCIMB 9373 / NCTC 2599 / NRRL B-3711)</name>
    <dbReference type="NCBI Taxonomy" id="226900"/>
    <lineage>
        <taxon>Bacteria</taxon>
        <taxon>Bacillati</taxon>
        <taxon>Bacillota</taxon>
        <taxon>Bacilli</taxon>
        <taxon>Bacillales</taxon>
        <taxon>Bacillaceae</taxon>
        <taxon>Bacillus</taxon>
        <taxon>Bacillus cereus group</taxon>
    </lineage>
</organism>
<dbReference type="EMBL" id="AE016877">
    <property type="protein sequence ID" value="AAP11295.1"/>
    <property type="molecule type" value="Genomic_DNA"/>
</dbReference>
<dbReference type="RefSeq" id="NP_834094.1">
    <property type="nucleotide sequence ID" value="NC_004722.1"/>
</dbReference>
<dbReference type="RefSeq" id="WP_000348590.1">
    <property type="nucleotide sequence ID" value="NZ_CP138336.1"/>
</dbReference>
<dbReference type="SMR" id="Q812R8"/>
<dbReference type="STRING" id="226900.BC_4382"/>
<dbReference type="KEGG" id="bce:BC4382"/>
<dbReference type="PATRIC" id="fig|226900.8.peg.4532"/>
<dbReference type="HOGENOM" id="CLU_162466_0_0_9"/>
<dbReference type="OrthoDB" id="9796303at2"/>
<dbReference type="Proteomes" id="UP000001417">
    <property type="component" value="Chromosome"/>
</dbReference>
<dbReference type="HAMAP" id="MF_01507">
    <property type="entry name" value="UPF0297"/>
    <property type="match status" value="1"/>
</dbReference>
<dbReference type="InterPro" id="IPR009309">
    <property type="entry name" value="IreB"/>
</dbReference>
<dbReference type="NCBIfam" id="NF003997">
    <property type="entry name" value="PRK05473.1"/>
    <property type="match status" value="1"/>
</dbReference>
<dbReference type="PANTHER" id="PTHR40067">
    <property type="entry name" value="UPF0297 PROTEIN YRZL"/>
    <property type="match status" value="1"/>
</dbReference>
<dbReference type="PANTHER" id="PTHR40067:SF1">
    <property type="entry name" value="UPF0297 PROTEIN YRZL"/>
    <property type="match status" value="1"/>
</dbReference>
<dbReference type="Pfam" id="PF06135">
    <property type="entry name" value="IreB"/>
    <property type="match status" value="1"/>
</dbReference>
<dbReference type="PIRSF" id="PIRSF037258">
    <property type="entry name" value="DUF965_bac"/>
    <property type="match status" value="1"/>
</dbReference>
<sequence length="88" mass="10330">MDGFDKTMKFSIQDEKQSVHVNDVLLTVYDALQEKGYNPINQIVGYLLSGDPAYIPRHKDARSIIRKLERDELIEELVKSYLKHHREE</sequence>
<gene>
    <name type="ordered locus">BC_4382</name>
</gene>
<keyword id="KW-1185">Reference proteome</keyword>
<reference key="1">
    <citation type="journal article" date="2003" name="Nature">
        <title>Genome sequence of Bacillus cereus and comparative analysis with Bacillus anthracis.</title>
        <authorList>
            <person name="Ivanova N."/>
            <person name="Sorokin A."/>
            <person name="Anderson I."/>
            <person name="Galleron N."/>
            <person name="Candelon B."/>
            <person name="Kapatral V."/>
            <person name="Bhattacharyya A."/>
            <person name="Reznik G."/>
            <person name="Mikhailova N."/>
            <person name="Lapidus A."/>
            <person name="Chu L."/>
            <person name="Mazur M."/>
            <person name="Goltsman E."/>
            <person name="Larsen N."/>
            <person name="D'Souza M."/>
            <person name="Walunas T."/>
            <person name="Grechkin Y."/>
            <person name="Pusch G."/>
            <person name="Haselkorn R."/>
            <person name="Fonstein M."/>
            <person name="Ehrlich S.D."/>
            <person name="Overbeek R."/>
            <person name="Kyrpides N.C."/>
        </authorList>
    </citation>
    <scope>NUCLEOTIDE SEQUENCE [LARGE SCALE GENOMIC DNA]</scope>
    <source>
        <strain>ATCC 14579 / DSM 31 / CCUG 7414 / JCM 2152 / NBRC 15305 / NCIMB 9373 / NCTC 2599 / NRRL B-3711</strain>
    </source>
</reference>
<evidence type="ECO:0000255" key="1">
    <source>
        <dbReference type="HAMAP-Rule" id="MF_01507"/>
    </source>
</evidence>
<comment type="similarity">
    <text evidence="1">Belongs to the UPF0297 family.</text>
</comment>